<reference key="1">
    <citation type="journal article" date="2003" name="Mol. Cell. Biol.">
        <title>Targeted disruption of the gene for the PAK5 kinase in mice.</title>
        <authorList>
            <person name="Li X."/>
            <person name="Minden A."/>
        </authorList>
    </citation>
    <scope>NUCLEOTIDE SEQUENCE [MRNA]</scope>
    <scope>TISSUE SPECIFICITY</scope>
    <scope>DEVELOPMENTAL STAGE</scope>
    <scope>DISRUPTION PHENOTYPE</scope>
    <source>
        <strain>BALB/cJ</strain>
        <tissue>Brain</tissue>
    </source>
</reference>
<reference key="2">
    <citation type="journal article" date="2005" name="Science">
        <title>The transcriptional landscape of the mammalian genome.</title>
        <authorList>
            <person name="Carninci P."/>
            <person name="Kasukawa T."/>
            <person name="Katayama S."/>
            <person name="Gough J."/>
            <person name="Frith M.C."/>
            <person name="Maeda N."/>
            <person name="Oyama R."/>
            <person name="Ravasi T."/>
            <person name="Lenhard B."/>
            <person name="Wells C."/>
            <person name="Kodzius R."/>
            <person name="Shimokawa K."/>
            <person name="Bajic V.B."/>
            <person name="Brenner S.E."/>
            <person name="Batalov S."/>
            <person name="Forrest A.R."/>
            <person name="Zavolan M."/>
            <person name="Davis M.J."/>
            <person name="Wilming L.G."/>
            <person name="Aidinis V."/>
            <person name="Allen J.E."/>
            <person name="Ambesi-Impiombato A."/>
            <person name="Apweiler R."/>
            <person name="Aturaliya R.N."/>
            <person name="Bailey T.L."/>
            <person name="Bansal M."/>
            <person name="Baxter L."/>
            <person name="Beisel K.W."/>
            <person name="Bersano T."/>
            <person name="Bono H."/>
            <person name="Chalk A.M."/>
            <person name="Chiu K.P."/>
            <person name="Choudhary V."/>
            <person name="Christoffels A."/>
            <person name="Clutterbuck D.R."/>
            <person name="Crowe M.L."/>
            <person name="Dalla E."/>
            <person name="Dalrymple B.P."/>
            <person name="de Bono B."/>
            <person name="Della Gatta G."/>
            <person name="di Bernardo D."/>
            <person name="Down T."/>
            <person name="Engstrom P."/>
            <person name="Fagiolini M."/>
            <person name="Faulkner G."/>
            <person name="Fletcher C.F."/>
            <person name="Fukushima T."/>
            <person name="Furuno M."/>
            <person name="Futaki S."/>
            <person name="Gariboldi M."/>
            <person name="Georgii-Hemming P."/>
            <person name="Gingeras T.R."/>
            <person name="Gojobori T."/>
            <person name="Green R.E."/>
            <person name="Gustincich S."/>
            <person name="Harbers M."/>
            <person name="Hayashi Y."/>
            <person name="Hensch T.K."/>
            <person name="Hirokawa N."/>
            <person name="Hill D."/>
            <person name="Huminiecki L."/>
            <person name="Iacono M."/>
            <person name="Ikeo K."/>
            <person name="Iwama A."/>
            <person name="Ishikawa T."/>
            <person name="Jakt M."/>
            <person name="Kanapin A."/>
            <person name="Katoh M."/>
            <person name="Kawasawa Y."/>
            <person name="Kelso J."/>
            <person name="Kitamura H."/>
            <person name="Kitano H."/>
            <person name="Kollias G."/>
            <person name="Krishnan S.P."/>
            <person name="Kruger A."/>
            <person name="Kummerfeld S.K."/>
            <person name="Kurochkin I.V."/>
            <person name="Lareau L.F."/>
            <person name="Lazarevic D."/>
            <person name="Lipovich L."/>
            <person name="Liu J."/>
            <person name="Liuni S."/>
            <person name="McWilliam S."/>
            <person name="Madan Babu M."/>
            <person name="Madera M."/>
            <person name="Marchionni L."/>
            <person name="Matsuda H."/>
            <person name="Matsuzawa S."/>
            <person name="Miki H."/>
            <person name="Mignone F."/>
            <person name="Miyake S."/>
            <person name="Morris K."/>
            <person name="Mottagui-Tabar S."/>
            <person name="Mulder N."/>
            <person name="Nakano N."/>
            <person name="Nakauchi H."/>
            <person name="Ng P."/>
            <person name="Nilsson R."/>
            <person name="Nishiguchi S."/>
            <person name="Nishikawa S."/>
            <person name="Nori F."/>
            <person name="Ohara O."/>
            <person name="Okazaki Y."/>
            <person name="Orlando V."/>
            <person name="Pang K.C."/>
            <person name="Pavan W.J."/>
            <person name="Pavesi G."/>
            <person name="Pesole G."/>
            <person name="Petrovsky N."/>
            <person name="Piazza S."/>
            <person name="Reed J."/>
            <person name="Reid J.F."/>
            <person name="Ring B.Z."/>
            <person name="Ringwald M."/>
            <person name="Rost B."/>
            <person name="Ruan Y."/>
            <person name="Salzberg S.L."/>
            <person name="Sandelin A."/>
            <person name="Schneider C."/>
            <person name="Schoenbach C."/>
            <person name="Sekiguchi K."/>
            <person name="Semple C.A."/>
            <person name="Seno S."/>
            <person name="Sessa L."/>
            <person name="Sheng Y."/>
            <person name="Shibata Y."/>
            <person name="Shimada H."/>
            <person name="Shimada K."/>
            <person name="Silva D."/>
            <person name="Sinclair B."/>
            <person name="Sperling S."/>
            <person name="Stupka E."/>
            <person name="Sugiura K."/>
            <person name="Sultana R."/>
            <person name="Takenaka Y."/>
            <person name="Taki K."/>
            <person name="Tammoja K."/>
            <person name="Tan S.L."/>
            <person name="Tang S."/>
            <person name="Taylor M.S."/>
            <person name="Tegner J."/>
            <person name="Teichmann S.A."/>
            <person name="Ueda H.R."/>
            <person name="van Nimwegen E."/>
            <person name="Verardo R."/>
            <person name="Wei C.L."/>
            <person name="Yagi K."/>
            <person name="Yamanishi H."/>
            <person name="Zabarovsky E."/>
            <person name="Zhu S."/>
            <person name="Zimmer A."/>
            <person name="Hide W."/>
            <person name="Bult C."/>
            <person name="Grimmond S.M."/>
            <person name="Teasdale R.D."/>
            <person name="Liu E.T."/>
            <person name="Brusic V."/>
            <person name="Quackenbush J."/>
            <person name="Wahlestedt C."/>
            <person name="Mattick J.S."/>
            <person name="Hume D.A."/>
            <person name="Kai C."/>
            <person name="Sasaki D."/>
            <person name="Tomaru Y."/>
            <person name="Fukuda S."/>
            <person name="Kanamori-Katayama M."/>
            <person name="Suzuki M."/>
            <person name="Aoki J."/>
            <person name="Arakawa T."/>
            <person name="Iida J."/>
            <person name="Imamura K."/>
            <person name="Itoh M."/>
            <person name="Kato T."/>
            <person name="Kawaji H."/>
            <person name="Kawagashira N."/>
            <person name="Kawashima T."/>
            <person name="Kojima M."/>
            <person name="Kondo S."/>
            <person name="Konno H."/>
            <person name="Nakano K."/>
            <person name="Ninomiya N."/>
            <person name="Nishio T."/>
            <person name="Okada M."/>
            <person name="Plessy C."/>
            <person name="Shibata K."/>
            <person name="Shiraki T."/>
            <person name="Suzuki S."/>
            <person name="Tagami M."/>
            <person name="Waki K."/>
            <person name="Watahiki A."/>
            <person name="Okamura-Oho Y."/>
            <person name="Suzuki H."/>
            <person name="Kawai J."/>
            <person name="Hayashizaki Y."/>
        </authorList>
    </citation>
    <scope>NUCLEOTIDE SEQUENCE [LARGE SCALE MRNA]</scope>
    <source>
        <strain>C57BL/6J</strain>
        <tissue>Corpora quadrigemina</tissue>
        <tissue>Olfactory bulb</tissue>
    </source>
</reference>
<reference key="3">
    <citation type="journal article" date="2002" name="Mol. Cell. Biol.">
        <title>PAK5, a new brain-specific kinase, promotes neurite outgrowth in N1E-115 cells.</title>
        <authorList>
            <person name="Dan C."/>
            <person name="Nath N."/>
            <person name="Liberto M."/>
            <person name="Minden A."/>
        </authorList>
    </citation>
    <scope>FUNCTION</scope>
</reference>
<reference key="4">
    <citation type="journal article" date="2006" name="Mol. Cell. Proteomics">
        <title>Comprehensive identification of phosphorylation sites in postsynaptic density preparations.</title>
        <authorList>
            <person name="Trinidad J.C."/>
            <person name="Specht C.G."/>
            <person name="Thalhammer A."/>
            <person name="Schoepfer R."/>
            <person name="Burlingame A.L."/>
        </authorList>
    </citation>
    <scope>PHOSPHORYLATION [LARGE SCALE ANALYSIS] AT SER-104 AND THR-107</scope>
    <scope>IDENTIFICATION BY MASS SPECTROMETRY [LARGE SCALE ANALYSIS]</scope>
    <source>
        <tissue>Brain</tissue>
    </source>
</reference>
<reference key="5">
    <citation type="journal article" date="2010" name="Cell">
        <title>A tissue-specific atlas of mouse protein phosphorylation and expression.</title>
        <authorList>
            <person name="Huttlin E.L."/>
            <person name="Jedrychowski M.P."/>
            <person name="Elias J.E."/>
            <person name="Goswami T."/>
            <person name="Rad R."/>
            <person name="Beausoleil S.A."/>
            <person name="Villen J."/>
            <person name="Haas W."/>
            <person name="Sowa M.E."/>
            <person name="Gygi S.P."/>
        </authorList>
    </citation>
    <scope>PHOSPHORYLATION [LARGE SCALE ANALYSIS] AT SER-104 AND THR-107</scope>
    <scope>IDENTIFICATION BY MASS SPECTROMETRY [LARGE SCALE ANALYSIS]</scope>
    <source>
        <tissue>Brain</tissue>
    </source>
</reference>
<name>PAK5_MOUSE</name>
<gene>
    <name evidence="7" type="primary">Pak5</name>
    <name evidence="9" type="synonym">Pak7</name>
</gene>
<dbReference type="EC" id="2.7.11.1"/>
<dbReference type="EMBL" id="AY487425">
    <property type="protein sequence ID" value="AAR37415.1"/>
    <property type="molecule type" value="mRNA"/>
</dbReference>
<dbReference type="EMBL" id="AK032593">
    <property type="protein sequence ID" value="BAC27939.1"/>
    <property type="molecule type" value="mRNA"/>
</dbReference>
<dbReference type="EMBL" id="AK163530">
    <property type="protein sequence ID" value="BAE37385.1"/>
    <property type="molecule type" value="mRNA"/>
</dbReference>
<dbReference type="CCDS" id="CCDS16790.1"/>
<dbReference type="RefSeq" id="NP_001347311.1">
    <property type="nucleotide sequence ID" value="NM_001360382.2"/>
</dbReference>
<dbReference type="RefSeq" id="NP_001347313.1">
    <property type="nucleotide sequence ID" value="NM_001360384.2"/>
</dbReference>
<dbReference type="RefSeq" id="NP_766446.2">
    <property type="nucleotide sequence ID" value="NM_172858.3"/>
</dbReference>
<dbReference type="RefSeq" id="XP_006499572.1">
    <property type="nucleotide sequence ID" value="XM_006499509.1"/>
</dbReference>
<dbReference type="RefSeq" id="XP_011237833.1">
    <property type="nucleotide sequence ID" value="XM_011239531.1"/>
</dbReference>
<dbReference type="RefSeq" id="XP_017173706.1">
    <property type="nucleotide sequence ID" value="XM_017318217.1"/>
</dbReference>
<dbReference type="RefSeq" id="XP_017173707.1">
    <property type="nucleotide sequence ID" value="XM_017318218.1"/>
</dbReference>
<dbReference type="RefSeq" id="XP_030107020.1">
    <property type="nucleotide sequence ID" value="XM_030251160.2"/>
</dbReference>
<dbReference type="RefSeq" id="XP_036017869.1">
    <property type="nucleotide sequence ID" value="XM_036161976.1"/>
</dbReference>
<dbReference type="SMR" id="Q8C015"/>
<dbReference type="BioGRID" id="232340">
    <property type="interactions" value="3"/>
</dbReference>
<dbReference type="FunCoup" id="Q8C015">
    <property type="interactions" value="1919"/>
</dbReference>
<dbReference type="IntAct" id="Q8C015">
    <property type="interactions" value="4"/>
</dbReference>
<dbReference type="MINT" id="Q8C015"/>
<dbReference type="STRING" id="10090.ENSMUSP00000047285"/>
<dbReference type="GlyGen" id="Q8C015">
    <property type="glycosylation" value="4 sites, 1 N-linked glycan (1 site), 1 O-linked glycan (2 sites)"/>
</dbReference>
<dbReference type="iPTMnet" id="Q8C015"/>
<dbReference type="PhosphoSitePlus" id="Q8C015"/>
<dbReference type="PaxDb" id="10090-ENSMUSP00000047285"/>
<dbReference type="ProteomicsDB" id="287941"/>
<dbReference type="Antibodypedia" id="8792">
    <property type="antibodies" value="367 antibodies from 39 providers"/>
</dbReference>
<dbReference type="DNASU" id="241656"/>
<dbReference type="Ensembl" id="ENSMUST00000035264.9">
    <property type="protein sequence ID" value="ENSMUSP00000047285.3"/>
    <property type="gene ID" value="ENSMUSG00000039913.13"/>
</dbReference>
<dbReference type="Ensembl" id="ENSMUST00000077200.4">
    <property type="protein sequence ID" value="ENSMUSP00000076440.4"/>
    <property type="gene ID" value="ENSMUSG00000039913.13"/>
</dbReference>
<dbReference type="GeneID" id="241656"/>
<dbReference type="KEGG" id="mmu:241656"/>
<dbReference type="UCSC" id="uc008moh.1">
    <property type="organism name" value="mouse"/>
</dbReference>
<dbReference type="AGR" id="MGI:1920334"/>
<dbReference type="CTD" id="57144"/>
<dbReference type="MGI" id="MGI:1920334">
    <property type="gene designation" value="Pak5"/>
</dbReference>
<dbReference type="VEuPathDB" id="HostDB:ENSMUSG00000039913"/>
<dbReference type="eggNOG" id="KOG0578">
    <property type="taxonomic scope" value="Eukaryota"/>
</dbReference>
<dbReference type="GeneTree" id="ENSGT00940000158656"/>
<dbReference type="HOGENOM" id="CLU_000288_26_6_1"/>
<dbReference type="InParanoid" id="Q8C015"/>
<dbReference type="OMA" id="KSHPQGH"/>
<dbReference type="OrthoDB" id="1022360at2759"/>
<dbReference type="PhylomeDB" id="Q8C015"/>
<dbReference type="TreeFam" id="TF105352"/>
<dbReference type="Reactome" id="R-MMU-9013149">
    <property type="pathway name" value="RAC1 GTPase cycle"/>
</dbReference>
<dbReference type="Reactome" id="R-MMU-9013405">
    <property type="pathway name" value="RHOD GTPase cycle"/>
</dbReference>
<dbReference type="Reactome" id="R-MMU-9013407">
    <property type="pathway name" value="RHOH GTPase cycle"/>
</dbReference>
<dbReference type="BioGRID-ORCS" id="241656">
    <property type="hits" value="1 hit in 79 CRISPR screens"/>
</dbReference>
<dbReference type="CD-CODE" id="CE726F99">
    <property type="entry name" value="Postsynaptic density"/>
</dbReference>
<dbReference type="ChiTaRS" id="Pak7">
    <property type="organism name" value="mouse"/>
</dbReference>
<dbReference type="PRO" id="PR:Q8C015"/>
<dbReference type="Proteomes" id="UP000000589">
    <property type="component" value="Chromosome 2"/>
</dbReference>
<dbReference type="RNAct" id="Q8C015">
    <property type="molecule type" value="protein"/>
</dbReference>
<dbReference type="Bgee" id="ENSMUSG00000039913">
    <property type="expression patterns" value="Expressed in lumbar subsegment of spinal cord and 83 other cell types or tissues"/>
</dbReference>
<dbReference type="GO" id="GO:0005829">
    <property type="term" value="C:cytosol"/>
    <property type="evidence" value="ECO:0007669"/>
    <property type="project" value="Ensembl"/>
</dbReference>
<dbReference type="GO" id="GO:0005739">
    <property type="term" value="C:mitochondrion"/>
    <property type="evidence" value="ECO:0000314"/>
    <property type="project" value="MGI"/>
</dbReference>
<dbReference type="GO" id="GO:0031965">
    <property type="term" value="C:nuclear membrane"/>
    <property type="evidence" value="ECO:0007669"/>
    <property type="project" value="Ensembl"/>
</dbReference>
<dbReference type="GO" id="GO:0005654">
    <property type="term" value="C:nucleoplasm"/>
    <property type="evidence" value="ECO:0007669"/>
    <property type="project" value="Ensembl"/>
</dbReference>
<dbReference type="GO" id="GO:0045202">
    <property type="term" value="C:synapse"/>
    <property type="evidence" value="ECO:0000314"/>
    <property type="project" value="SynGO"/>
</dbReference>
<dbReference type="GO" id="GO:0005524">
    <property type="term" value="F:ATP binding"/>
    <property type="evidence" value="ECO:0007669"/>
    <property type="project" value="UniProtKB-KW"/>
</dbReference>
<dbReference type="GO" id="GO:0106310">
    <property type="term" value="F:protein serine kinase activity"/>
    <property type="evidence" value="ECO:0007669"/>
    <property type="project" value="RHEA"/>
</dbReference>
<dbReference type="GO" id="GO:0004674">
    <property type="term" value="F:protein serine/threonine kinase activity"/>
    <property type="evidence" value="ECO:0000314"/>
    <property type="project" value="MGI"/>
</dbReference>
<dbReference type="GO" id="GO:0006915">
    <property type="term" value="P:apoptotic process"/>
    <property type="evidence" value="ECO:0007669"/>
    <property type="project" value="UniProtKB-KW"/>
</dbReference>
<dbReference type="GO" id="GO:0007010">
    <property type="term" value="P:cytoskeleton organization"/>
    <property type="evidence" value="ECO:0007669"/>
    <property type="project" value="InterPro"/>
</dbReference>
<dbReference type="GO" id="GO:0007612">
    <property type="term" value="P:learning"/>
    <property type="evidence" value="ECO:0000316"/>
    <property type="project" value="MGI"/>
</dbReference>
<dbReference type="GO" id="GO:0007626">
    <property type="term" value="P:locomotory behavior"/>
    <property type="evidence" value="ECO:0000316"/>
    <property type="project" value="MGI"/>
</dbReference>
<dbReference type="GO" id="GO:0007613">
    <property type="term" value="P:memory"/>
    <property type="evidence" value="ECO:0000316"/>
    <property type="project" value="MGI"/>
</dbReference>
<dbReference type="GO" id="GO:2001237">
    <property type="term" value="P:negative regulation of extrinsic apoptotic signaling pathway"/>
    <property type="evidence" value="ECO:0000314"/>
    <property type="project" value="MGI"/>
</dbReference>
<dbReference type="CDD" id="cd01093">
    <property type="entry name" value="CRIB_PAK_like"/>
    <property type="match status" value="1"/>
</dbReference>
<dbReference type="CDD" id="cd06658">
    <property type="entry name" value="STKc_PAK5"/>
    <property type="match status" value="1"/>
</dbReference>
<dbReference type="FunFam" id="1.10.510.10:FF:000073">
    <property type="entry name" value="Non-specific serine/threonine protein kinase"/>
    <property type="match status" value="1"/>
</dbReference>
<dbReference type="FunFam" id="3.30.200.20:FF:000141">
    <property type="entry name" value="Non-specific serine/threonine protein kinase"/>
    <property type="match status" value="1"/>
</dbReference>
<dbReference type="FunFam" id="3.90.810.10:FF:000002">
    <property type="entry name" value="Non-specific serine/threonine protein kinase"/>
    <property type="match status" value="1"/>
</dbReference>
<dbReference type="Gene3D" id="3.90.810.10">
    <property type="entry name" value="CRIB domain"/>
    <property type="match status" value="1"/>
</dbReference>
<dbReference type="Gene3D" id="3.30.200.20">
    <property type="entry name" value="Phosphorylase Kinase, domain 1"/>
    <property type="match status" value="1"/>
</dbReference>
<dbReference type="Gene3D" id="1.10.510.10">
    <property type="entry name" value="Transferase(Phosphotransferase) domain 1"/>
    <property type="match status" value="1"/>
</dbReference>
<dbReference type="InterPro" id="IPR000095">
    <property type="entry name" value="CRIB_dom"/>
</dbReference>
<dbReference type="InterPro" id="IPR036936">
    <property type="entry name" value="CRIB_dom_sf"/>
</dbReference>
<dbReference type="InterPro" id="IPR011009">
    <property type="entry name" value="Kinase-like_dom_sf"/>
</dbReference>
<dbReference type="InterPro" id="IPR051931">
    <property type="entry name" value="PAK3-like"/>
</dbReference>
<dbReference type="InterPro" id="IPR033923">
    <property type="entry name" value="PAK_BD"/>
</dbReference>
<dbReference type="InterPro" id="IPR000719">
    <property type="entry name" value="Prot_kinase_dom"/>
</dbReference>
<dbReference type="InterPro" id="IPR017441">
    <property type="entry name" value="Protein_kinase_ATP_BS"/>
</dbReference>
<dbReference type="InterPro" id="IPR028754">
    <property type="entry name" value="STKc_PAK5"/>
</dbReference>
<dbReference type="PANTHER" id="PTHR45832:SF4">
    <property type="entry name" value="NON-SPECIFIC SERINE_THREONINE PROTEIN KINASE"/>
    <property type="match status" value="1"/>
</dbReference>
<dbReference type="PANTHER" id="PTHR45832">
    <property type="entry name" value="SERINE/THREONINE-PROTEIN KINASE SAMKA-RELATED-RELATED"/>
    <property type="match status" value="1"/>
</dbReference>
<dbReference type="Pfam" id="PF00786">
    <property type="entry name" value="PBD"/>
    <property type="match status" value="1"/>
</dbReference>
<dbReference type="Pfam" id="PF00069">
    <property type="entry name" value="Pkinase"/>
    <property type="match status" value="1"/>
</dbReference>
<dbReference type="SMART" id="SM00285">
    <property type="entry name" value="PBD"/>
    <property type="match status" value="1"/>
</dbReference>
<dbReference type="SUPFAM" id="SSF56112">
    <property type="entry name" value="Protein kinase-like (PK-like)"/>
    <property type="match status" value="1"/>
</dbReference>
<dbReference type="PROSITE" id="PS50108">
    <property type="entry name" value="CRIB"/>
    <property type="match status" value="1"/>
</dbReference>
<dbReference type="PROSITE" id="PS00107">
    <property type="entry name" value="PROTEIN_KINASE_ATP"/>
    <property type="match status" value="1"/>
</dbReference>
<dbReference type="PROSITE" id="PS50011">
    <property type="entry name" value="PROTEIN_KINASE_DOM"/>
    <property type="match status" value="1"/>
</dbReference>
<organism>
    <name type="scientific">Mus musculus</name>
    <name type="common">Mouse</name>
    <dbReference type="NCBI Taxonomy" id="10090"/>
    <lineage>
        <taxon>Eukaryota</taxon>
        <taxon>Metazoa</taxon>
        <taxon>Chordata</taxon>
        <taxon>Craniata</taxon>
        <taxon>Vertebrata</taxon>
        <taxon>Euteleostomi</taxon>
        <taxon>Mammalia</taxon>
        <taxon>Eutheria</taxon>
        <taxon>Euarchontoglires</taxon>
        <taxon>Glires</taxon>
        <taxon>Rodentia</taxon>
        <taxon>Myomorpha</taxon>
        <taxon>Muroidea</taxon>
        <taxon>Muridae</taxon>
        <taxon>Murinae</taxon>
        <taxon>Mus</taxon>
        <taxon>Mus</taxon>
    </lineage>
</organism>
<evidence type="ECO:0000250" key="1"/>
<evidence type="ECO:0000255" key="2">
    <source>
        <dbReference type="PROSITE-ProRule" id="PRU00057"/>
    </source>
</evidence>
<evidence type="ECO:0000255" key="3">
    <source>
        <dbReference type="PROSITE-ProRule" id="PRU00159"/>
    </source>
</evidence>
<evidence type="ECO:0000256" key="4">
    <source>
        <dbReference type="SAM" id="MobiDB-lite"/>
    </source>
</evidence>
<evidence type="ECO:0000269" key="5">
    <source>
    </source>
</evidence>
<evidence type="ECO:0000269" key="6">
    <source>
    </source>
</evidence>
<evidence type="ECO:0000303" key="7">
    <source>
    </source>
</evidence>
<evidence type="ECO:0000305" key="8"/>
<evidence type="ECO:0000312" key="9">
    <source>
        <dbReference type="MGI" id="MGI:1920334"/>
    </source>
</evidence>
<evidence type="ECO:0007744" key="10">
    <source>
    </source>
</evidence>
<evidence type="ECO:0007744" key="11">
    <source>
    </source>
</evidence>
<feature type="chain" id="PRO_0000086478" description="Serine/threonine-protein kinase PAK 5">
    <location>
        <begin position="1"/>
        <end position="719"/>
    </location>
</feature>
<feature type="domain" description="CRIB" evidence="2">
    <location>
        <begin position="11"/>
        <end position="24"/>
    </location>
</feature>
<feature type="domain" description="Protein kinase" evidence="3">
    <location>
        <begin position="449"/>
        <end position="700"/>
    </location>
</feature>
<feature type="region of interest" description="Disordered" evidence="4">
    <location>
        <begin position="1"/>
        <end position="28"/>
    </location>
</feature>
<feature type="region of interest" description="Linker">
    <location>
        <begin position="25"/>
        <end position="448"/>
    </location>
</feature>
<feature type="region of interest" description="Disordered" evidence="4">
    <location>
        <begin position="96"/>
        <end position="118"/>
    </location>
</feature>
<feature type="region of interest" description="Disordered" evidence="4">
    <location>
        <begin position="226"/>
        <end position="245"/>
    </location>
</feature>
<feature type="region of interest" description="Disordered" evidence="4">
    <location>
        <begin position="253"/>
        <end position="298"/>
    </location>
</feature>
<feature type="region of interest" description="Disordered" evidence="4">
    <location>
        <begin position="339"/>
        <end position="372"/>
    </location>
</feature>
<feature type="compositionally biased region" description="Polar residues" evidence="4">
    <location>
        <begin position="226"/>
        <end position="244"/>
    </location>
</feature>
<feature type="compositionally biased region" description="Polar residues" evidence="4">
    <location>
        <begin position="357"/>
        <end position="372"/>
    </location>
</feature>
<feature type="active site" description="Proton acceptor" evidence="3">
    <location>
        <position position="568"/>
    </location>
</feature>
<feature type="binding site" evidence="3">
    <location>
        <begin position="455"/>
        <end position="463"/>
    </location>
    <ligand>
        <name>ATP</name>
        <dbReference type="ChEBI" id="CHEBI:30616"/>
    </ligand>
</feature>
<feature type="binding site" evidence="3">
    <location>
        <position position="478"/>
    </location>
    <ligand>
        <name>ATP</name>
        <dbReference type="ChEBI" id="CHEBI:30616"/>
    </ligand>
</feature>
<feature type="modified residue" description="Phosphoserine" evidence="10 11">
    <location>
        <position position="104"/>
    </location>
</feature>
<feature type="modified residue" description="Phosphothreonine" evidence="10 11">
    <location>
        <position position="107"/>
    </location>
</feature>
<feature type="sequence conflict" description="In Ref. 1; AAR37415." evidence="8" ref="1">
    <original>S</original>
    <variation>F</variation>
    <location>
        <position position="315"/>
    </location>
</feature>
<feature type="sequence conflict" description="In Ref. 1; AAR37415." evidence="8" ref="1">
    <original>R</original>
    <variation>G</variation>
    <location>
        <position position="320"/>
    </location>
</feature>
<feature type="sequence conflict" description="In Ref. 1; AAR37415." evidence="8" ref="1">
    <original>K</original>
    <variation>R</variation>
    <location>
        <position position="454"/>
    </location>
</feature>
<feature type="sequence conflict" description="In Ref. 1; AAR37415." evidence="8" ref="1">
    <original>V</original>
    <variation>A</variation>
    <location>
        <position position="522"/>
    </location>
</feature>
<feature type="sequence conflict" description="In Ref. 1; AAR37415." evidence="8" ref="1">
    <original>K</original>
    <variation>E</variation>
    <location>
        <position position="664"/>
    </location>
</feature>
<feature type="sequence conflict" description="In Ref. 1; AAR37415." evidence="8" ref="1">
    <original>Q</original>
    <variation>R</variation>
    <location>
        <position position="687"/>
    </location>
</feature>
<proteinExistence type="evidence at protein level"/>
<comment type="function">
    <text evidence="1 5">Serine/threonine protein kinase that plays a role in a variety of different signaling pathways including cytoskeleton regulation, cell migration, proliferation or cell survival. Activation by various effectors including growth factor receptors or active CDC42 and RAC1 results in a conformational change and a subsequent autophosphorylation on several serine and/or threonine residues. Phosphorylates the proto-oncogene RAF1 and stimulates its kinase activity. Promotes cell survival by phosphorylating the BCL2 antagonist of cell death BAD. Phosphorylates CTNND1, probably to regulate cytoskeletal organization and cell morphology. Keeps microtubules stable through MARK2 inhibition and destabilizes the F-actin network leading to the disappearance of stress fibers and focal adhesions (By similarity).</text>
</comment>
<comment type="catalytic activity">
    <reaction>
        <text>L-seryl-[protein] + ATP = O-phospho-L-seryl-[protein] + ADP + H(+)</text>
        <dbReference type="Rhea" id="RHEA:17989"/>
        <dbReference type="Rhea" id="RHEA-COMP:9863"/>
        <dbReference type="Rhea" id="RHEA-COMP:11604"/>
        <dbReference type="ChEBI" id="CHEBI:15378"/>
        <dbReference type="ChEBI" id="CHEBI:29999"/>
        <dbReference type="ChEBI" id="CHEBI:30616"/>
        <dbReference type="ChEBI" id="CHEBI:83421"/>
        <dbReference type="ChEBI" id="CHEBI:456216"/>
        <dbReference type="EC" id="2.7.11.1"/>
    </reaction>
</comment>
<comment type="catalytic activity">
    <reaction>
        <text>L-threonyl-[protein] + ATP = O-phospho-L-threonyl-[protein] + ADP + H(+)</text>
        <dbReference type="Rhea" id="RHEA:46608"/>
        <dbReference type="Rhea" id="RHEA-COMP:11060"/>
        <dbReference type="Rhea" id="RHEA-COMP:11605"/>
        <dbReference type="ChEBI" id="CHEBI:15378"/>
        <dbReference type="ChEBI" id="CHEBI:30013"/>
        <dbReference type="ChEBI" id="CHEBI:30616"/>
        <dbReference type="ChEBI" id="CHEBI:61977"/>
        <dbReference type="ChEBI" id="CHEBI:456216"/>
        <dbReference type="EC" id="2.7.11.1"/>
    </reaction>
</comment>
<comment type="subunit">
    <text evidence="1">Interacts tightly with GTP-bound but not GDP-bound CDC42/p21 and RAC1. Interacts with MARK2, leading to inhibit MARK2 independently of kinase activity. Interacts with RHOD and RHOH (By similarity).</text>
</comment>
<comment type="subcellular location">
    <subcellularLocation>
        <location evidence="1">Mitochondrion</location>
    </subcellularLocation>
    <subcellularLocation>
        <location evidence="1">Cytoplasm</location>
    </subcellularLocation>
    <subcellularLocation>
        <location evidence="1">Nucleus</location>
    </subcellularLocation>
    <text evidence="1">Shuttles between the nucleus and the mitochondria, and mitochondrial localization is essential for the role in cell survival.</text>
</comment>
<comment type="tissue specificity">
    <text evidence="6">Highly expressed in brain and eye. Also expressed in adrenal gland, pancreas, prostate and testes. Within the brain, expression is restricted to neurons. Present in brain but not in kidney, lung and spleen (at protein level).</text>
</comment>
<comment type="developmental stage">
    <text evidence="6">Expressed in fetal brain.</text>
</comment>
<comment type="domain">
    <text evidence="1">An autoinhibitory domain is present in the N-terminal region of the protein.</text>
</comment>
<comment type="PTM">
    <text evidence="1">Autophosphorylated when activated by CDC42/p21.</text>
</comment>
<comment type="disruption phenotype">
    <text evidence="6">Mice are viable and fertile, and show normal development of brain, eye, pancreas and adrenal gland.</text>
</comment>
<comment type="similarity">
    <text evidence="8">Belongs to the protein kinase superfamily. STE Ser/Thr protein kinase family. STE20 subfamily.</text>
</comment>
<protein>
    <recommendedName>
        <fullName>Serine/threonine-protein kinase PAK 5</fullName>
        <ecNumber>2.7.11.1</ecNumber>
    </recommendedName>
    <alternativeName>
        <fullName>p21-activated kinase 5</fullName>
        <shortName>PAK-5</shortName>
    </alternativeName>
    <alternativeName>
        <fullName>p21-activated kinase 7</fullName>
        <shortName>PAK-7</shortName>
    </alternativeName>
</protein>
<sequence>MFGKKKKKIEISGPSNFEHRVHTGFDPQEQKFTGLPQQWHSLLADTANRPKPMVDPSCITPIQLAPMKTIVRGNKSCKETSINGLLEDFDNISVTRSNSLRKESPPTPDQGAASRIQGHSEENGFITFSQYSSESDTTADYTTEKYRDRSLYGDDLDLYYKSSHAAKQNGHAMKMKHGDAYYPEMKSLKTDLAGFPVDYHTHLDSLRKSSEYGDLRWDYQRASSSSPLDYSFQLTPSRTAGTSRCSKESLAYSESDWGPSLDDYDRRPKSSYLHQTSPQPAMRQRSKSGSGLQEPMMPFGASAFKTHPQGHSYNSYTYPRLSEPTMCIPKVDYDRAQMVFSPPLSGSDTYPRGPTKLPQSQSKAGYSSGSHQYPSGYHKASLYHHPSLQTSSQYISTASYLSSLSISSSTYPPPSWGSSSDQQPSRVSHEQFRAALQLVVSPGDPREYLDNFIKIGEGSTGIVCIATEKHTGKQVAVKKMDLRKQQRRELLFNEVVIMRDYHHDNVVDMYNSYLVGDELWVVMEFLEGGALTDIVTHTRMNEEQIATVCLSVLKALSYLHNQGVIHRDIKSDSILLTSDGRIKLSDFGFCAQVSKEVPKRKSLVGTPYWMAPEVISRLPYGTEVDIWSLGIMVIEMIDGEPPYFNEPPLQAMRRIRDSLPPRVKDLHKVSSMLRGFLDLMLVREPSQRATAQELLGHPFLKLAGPPSCIVPLMRQYRHH</sequence>
<keyword id="KW-0053">Apoptosis</keyword>
<keyword id="KW-0067">ATP-binding</keyword>
<keyword id="KW-0963">Cytoplasm</keyword>
<keyword id="KW-0418">Kinase</keyword>
<keyword id="KW-0496">Mitochondrion</keyword>
<keyword id="KW-0547">Nucleotide-binding</keyword>
<keyword id="KW-0539">Nucleus</keyword>
<keyword id="KW-0597">Phosphoprotein</keyword>
<keyword id="KW-1185">Reference proteome</keyword>
<keyword id="KW-0723">Serine/threonine-protein kinase</keyword>
<keyword id="KW-0808">Transferase</keyword>
<accession>Q8C015</accession>
<accession>Q3TQJ7</accession>
<accession>Q6RWS7</accession>